<gene>
    <name evidence="10" type="primary">LPMO9B</name>
    <name type="synonym">eglD</name>
    <name type="ORF">AN1602</name>
</gene>
<sequence length="357" mass="36732">MKFSSVLALAASAKLVASHATVFAVWINDEDQGLGNTADGYIRTPPNNSPVTDVTSTDLTCNVNGDQAAAKTLEVAAGDKITFEWHHNSRDSSDDIIADSHKGPVLVYMAPTEAGSAGKNWVKIYEDGYNDGTWAVDTLIANKGKHSVTVPDVPAGNYLFRPEIIALHEGNREGGAQLYMECVQFKVTSDGTTQLPEGVSLPGAYTATDEGILFDIYSSFDSYPIPGPAVWDGASSGSGSSGSGSSSSAAATSSAEKTATSTTAAATTTAVATSTSSATQVQPTSVATFTTSVRPTTSAAPTTSAPTSSAAPTGGTGTGSIQIYQQCGGMNYKGATGCASGLTCKQWNPYYHQCVQA</sequence>
<comment type="function">
    <text evidence="5 8">Lytic polysaccharide monooxygenase (LPMO) that depolymerizes crystalline and amorphous polysaccharides via the oxidation of scissile alpha- or beta-(1-4)-glycosidic bonds, yielding C4 oxidation products (PubMed:16844780, PubMed:30328527). Catalysis by LPMOs requires the reduction of the active-site copper from Cu(II) to Cu(I) by a reducing agent and H(2)O(2) or O(2) as a cosubstrate (PubMed:30328527). Active on carboxymethylcellulose (CMC), hydroxyethylcellulose (HEC) and beta-glucan (PubMed:16844780). Also active on soluble cellohexaose, a property that is restricted to only a few characterized LPMOs (PubMed:30328527).</text>
</comment>
<comment type="catalytic activity">
    <reaction evidence="5 8">
        <text>[(1-&gt;4)-beta-D-glucosyl]n+m + reduced acceptor + O2 = 4-dehydro-beta-D-glucosyl-[(1-&gt;4)-beta-D-glucosyl]n-1 + [(1-&gt;4)-beta-D-glucosyl]m + acceptor + H2O.</text>
        <dbReference type="EC" id="1.14.99.56"/>
    </reaction>
</comment>
<comment type="cofactor">
    <cofactor evidence="8">
        <name>Cu(2+)</name>
        <dbReference type="ChEBI" id="CHEBI:29036"/>
    </cofactor>
    <text evidence="8">Binds 1 copper ion per subunit.</text>
</comment>
<comment type="biophysicochemical properties">
    <phDependence>
        <text evidence="5">Optimum pH is under 6.0.</text>
    </phDependence>
</comment>
<comment type="subcellular location">
    <subcellularLocation>
        <location evidence="7 9">Secreted</location>
    </subcellularLocation>
</comment>
<comment type="induction">
    <text evidence="6 9">Expression is induced by cellulose and xylan (PubMed:27075737). Expression is also induced on lignocellulose, such as steam-exploded sugarcane bagasse (SCB) (PubMed:35658600). The degenerate binding motif 5'-SYGGRG-3' that binds to creA involved in carbon catabolite repression is present in the promoter (PubMed:27075737).</text>
</comment>
<comment type="domain">
    <text evidence="8">Has a modular structure: an endo-beta-1,4-glucanase catalytic module at the N-terminus, a linker rich in serines and threonines, and a C-terminal carbohydrate-binding module (CBM). The genes for catalytic modules and CBMs seem to have evolved separately and have been linked by gene fusion.</text>
</comment>
<comment type="biotechnology">
    <text evidence="6">Lignocellulose is the most abundant polymeric composite on Earth and is a recalcitrant but promising renewable substrate for industrial biotechnology applications. Together with cellobiose dehydrogenases (CDHs) an enzymatic system capable of oxidative cellulose cleavage is formed, which increases the efficiency of cellulases and put LPMOs at focus of biofuel research.</text>
</comment>
<comment type="similarity">
    <text evidence="11">Belongs to the polysaccharide monooxygenase AA9 family.</text>
</comment>
<name>LP9B_EMENI</name>
<reference key="1">
    <citation type="journal article" date="2006" name="Proc. Natl. Acad. Sci. U.S.A.">
        <title>Development and application of a suite of polysaccharide-degrading enzymes for analyzing plant cell walls.</title>
        <authorList>
            <person name="Bauer S."/>
            <person name="Vasu P."/>
            <person name="Persson S."/>
            <person name="Mort A.J."/>
            <person name="Somerville C.R."/>
        </authorList>
    </citation>
    <scope>NUCLEOTIDE SEQUENCE [MRNA]</scope>
    <scope>FUNCTION</scope>
    <scope>BIOPHYSICOCHEMICAL PROPERTIES</scope>
    <source>
        <strain>FGSC A4 / ATCC 38163 / CBS 112.46 / NRRL 194 / M139</strain>
    </source>
</reference>
<reference key="2">
    <citation type="journal article" date="2005" name="Nature">
        <title>Sequencing of Aspergillus nidulans and comparative analysis with A. fumigatus and A. oryzae.</title>
        <authorList>
            <person name="Galagan J.E."/>
            <person name="Calvo S.E."/>
            <person name="Cuomo C."/>
            <person name="Ma L.-J."/>
            <person name="Wortman J.R."/>
            <person name="Batzoglou S."/>
            <person name="Lee S.-I."/>
            <person name="Bastuerkmen M."/>
            <person name="Spevak C.C."/>
            <person name="Clutterbuck J."/>
            <person name="Kapitonov V."/>
            <person name="Jurka J."/>
            <person name="Scazzocchio C."/>
            <person name="Farman M.L."/>
            <person name="Butler J."/>
            <person name="Purcell S."/>
            <person name="Harris S."/>
            <person name="Braus G.H."/>
            <person name="Draht O."/>
            <person name="Busch S."/>
            <person name="D'Enfert C."/>
            <person name="Bouchier C."/>
            <person name="Goldman G.H."/>
            <person name="Bell-Pedersen D."/>
            <person name="Griffiths-Jones S."/>
            <person name="Doonan J.H."/>
            <person name="Yu J."/>
            <person name="Vienken K."/>
            <person name="Pain A."/>
            <person name="Freitag M."/>
            <person name="Selker E.U."/>
            <person name="Archer D.B."/>
            <person name="Penalva M.A."/>
            <person name="Oakley B.R."/>
            <person name="Momany M."/>
            <person name="Tanaka T."/>
            <person name="Kumagai T."/>
            <person name="Asai K."/>
            <person name="Machida M."/>
            <person name="Nierman W.C."/>
            <person name="Denning D.W."/>
            <person name="Caddick M.X."/>
            <person name="Hynes M."/>
            <person name="Paoletti M."/>
            <person name="Fischer R."/>
            <person name="Miller B.L."/>
            <person name="Dyer P.S."/>
            <person name="Sachs M.S."/>
            <person name="Osmani S.A."/>
            <person name="Birren B.W."/>
        </authorList>
    </citation>
    <scope>NUCLEOTIDE SEQUENCE [LARGE SCALE GENOMIC DNA]</scope>
    <source>
        <strain>FGSC A4 / ATCC 38163 / CBS 112.46 / NRRL 194 / M139</strain>
    </source>
</reference>
<reference key="3">
    <citation type="journal article" date="2009" name="Fungal Genet. Biol.">
        <title>The 2008 update of the Aspergillus nidulans genome annotation: a community effort.</title>
        <authorList>
            <person name="Wortman J.R."/>
            <person name="Gilsenan J.M."/>
            <person name="Joardar V."/>
            <person name="Deegan J."/>
            <person name="Clutterbuck J."/>
            <person name="Andersen M.R."/>
            <person name="Archer D."/>
            <person name="Bencina M."/>
            <person name="Braus G."/>
            <person name="Coutinho P."/>
            <person name="von Dohren H."/>
            <person name="Doonan J."/>
            <person name="Driessen A.J."/>
            <person name="Durek P."/>
            <person name="Espeso E."/>
            <person name="Fekete E."/>
            <person name="Flipphi M."/>
            <person name="Estrada C.G."/>
            <person name="Geysens S."/>
            <person name="Goldman G."/>
            <person name="de Groot P.W."/>
            <person name="Hansen K."/>
            <person name="Harris S.D."/>
            <person name="Heinekamp T."/>
            <person name="Helmstaedt K."/>
            <person name="Henrissat B."/>
            <person name="Hofmann G."/>
            <person name="Homan T."/>
            <person name="Horio T."/>
            <person name="Horiuchi H."/>
            <person name="James S."/>
            <person name="Jones M."/>
            <person name="Karaffa L."/>
            <person name="Karanyi Z."/>
            <person name="Kato M."/>
            <person name="Keller N."/>
            <person name="Kelly D.E."/>
            <person name="Kiel J.A."/>
            <person name="Kim J.M."/>
            <person name="van der Klei I.J."/>
            <person name="Klis F.M."/>
            <person name="Kovalchuk A."/>
            <person name="Krasevec N."/>
            <person name="Kubicek C.P."/>
            <person name="Liu B."/>
            <person name="Maccabe A."/>
            <person name="Meyer V."/>
            <person name="Mirabito P."/>
            <person name="Miskei M."/>
            <person name="Mos M."/>
            <person name="Mullins J."/>
            <person name="Nelson D.R."/>
            <person name="Nielsen J."/>
            <person name="Oakley B.R."/>
            <person name="Osmani S.A."/>
            <person name="Pakula T."/>
            <person name="Paszewski A."/>
            <person name="Paulsen I."/>
            <person name="Pilsyk S."/>
            <person name="Pocsi I."/>
            <person name="Punt P.J."/>
            <person name="Ram A.F."/>
            <person name="Ren Q."/>
            <person name="Robellet X."/>
            <person name="Robson G."/>
            <person name="Seiboth B."/>
            <person name="van Solingen P."/>
            <person name="Specht T."/>
            <person name="Sun J."/>
            <person name="Taheri-Talesh N."/>
            <person name="Takeshita N."/>
            <person name="Ussery D."/>
            <person name="vanKuyk P.A."/>
            <person name="Visser H."/>
            <person name="van de Vondervoort P.J."/>
            <person name="de Vries R.P."/>
            <person name="Walton J."/>
            <person name="Xiang X."/>
            <person name="Xiong Y."/>
            <person name="Zeng A.P."/>
            <person name="Brandt B.W."/>
            <person name="Cornell M.J."/>
            <person name="van den Hondel C.A."/>
            <person name="Visser J."/>
            <person name="Oliver S.G."/>
            <person name="Turner G."/>
        </authorList>
    </citation>
    <scope>GENOME REANNOTATION</scope>
    <source>
        <strain>FGSC A4 / ATCC 38163 / CBS 112.46 / NRRL 194 / M139</strain>
    </source>
</reference>
<reference key="4">
    <citation type="journal article" date="2016" name="Appl. Microbiol. Biotechnol.">
        <title>A family of AA9 lytic polysaccharide monooxygenases in Aspergillus nidulans is differentially regulated by multiple substrates and at least one is active on cellulose and xyloglucan.</title>
        <authorList>
            <person name="Jagadeeswaran G."/>
            <person name="Gainey L."/>
            <person name="Prade R."/>
            <person name="Mort A.J."/>
        </authorList>
    </citation>
    <scope>FUNCTION</scope>
    <scope>INDUCTION</scope>
    <scope>BIOTECHNOLOGY</scope>
</reference>
<reference key="5">
    <citation type="journal article" date="2016" name="Biotechnol. Biofuels">
        <title>Lytic polysaccharide monooxygenases and other oxidative enzymes are abundantly secreted by Aspergillus nidulans grown on different starches.</title>
        <authorList>
            <person name="Nekiunaite L."/>
            <person name="Arntzen M.O."/>
            <person name="Svensson B."/>
            <person name="Vaaje-Kolstad G."/>
            <person name="Abou Hachem M."/>
        </authorList>
    </citation>
    <scope>IDENTIFICATION</scope>
    <scope>SUBCELLULAR LOCATION</scope>
</reference>
<reference key="6">
    <citation type="journal article" date="2018" name="AMB Express">
        <title>An AA9-LPMO containing a CBM1 domain in Aspergillus nidulans is active on cellulose and cleaves cello-oligosaccharides.</title>
        <authorList>
            <person name="Jagadeeswaran G."/>
            <person name="Gainey L."/>
            <person name="Mort A.J."/>
        </authorList>
    </citation>
    <scope>FUNCTION</scope>
    <scope>CATALYTIC ACTIVITY</scope>
    <scope>DOMAIN</scope>
</reference>
<reference key="7">
    <citation type="journal article" date="2022" name="Microbiol. Spectr.">
        <title>Deletion of AA9 Lytic Polysaccharide Monooxygenases Impacts A. nidulans Secretome and Growth on Lignocellulose.</title>
        <authorList>
            <person name="Terrasan C.R.F."/>
            <person name="Rubio M.V."/>
            <person name="Gerhardt J.A."/>
            <person name="Cairo J.P.F."/>
            <person name="Contesini F.J."/>
            <person name="Zubieta M.P."/>
            <person name="Figueiredo F.L."/>
            <person name="Valadares F.L."/>
            <person name="Correa T.L.R."/>
            <person name="Murakami M.T."/>
            <person name="Franco T.T."/>
            <person name="Davies G.J."/>
            <person name="Walton P.H."/>
            <person name="Damasio A."/>
        </authorList>
    </citation>
    <scope>FUNCTION</scope>
    <scope>SUBCELLULAR LOCATION</scope>
</reference>
<dbReference type="EC" id="1.14.99.56" evidence="5 8"/>
<dbReference type="EMBL" id="DQ490474">
    <property type="protein sequence ID" value="ABF50850.1"/>
    <property type="molecule type" value="mRNA"/>
</dbReference>
<dbReference type="EMBL" id="AACD01000026">
    <property type="protein sequence ID" value="EAA64722.1"/>
    <property type="molecule type" value="Genomic_DNA"/>
</dbReference>
<dbReference type="EMBL" id="BN001307">
    <property type="protein sequence ID" value="CBF85202.1"/>
    <property type="molecule type" value="Genomic_DNA"/>
</dbReference>
<dbReference type="RefSeq" id="XP_659206.1">
    <property type="nucleotide sequence ID" value="XM_654114.1"/>
</dbReference>
<dbReference type="SMR" id="Q5BCX8"/>
<dbReference type="STRING" id="227321.Q5BCX8"/>
<dbReference type="CAZy" id="AA9">
    <property type="family name" value="Auxiliary Activities 9"/>
</dbReference>
<dbReference type="CAZy" id="CBM1">
    <property type="family name" value="Carbohydrate-Binding Module Family 1"/>
</dbReference>
<dbReference type="EnsemblFungi" id="CBF85202">
    <property type="protein sequence ID" value="CBF85202"/>
    <property type="gene ID" value="ANIA_01602"/>
</dbReference>
<dbReference type="KEGG" id="ani:ANIA_01602"/>
<dbReference type="VEuPathDB" id="FungiDB:AN1602"/>
<dbReference type="eggNOG" id="ENOG502RXMI">
    <property type="taxonomic scope" value="Eukaryota"/>
</dbReference>
<dbReference type="HOGENOM" id="CLU_031730_0_0_1"/>
<dbReference type="InParanoid" id="Q5BCX8"/>
<dbReference type="OMA" id="YIDSPPN"/>
<dbReference type="OrthoDB" id="5558646at2759"/>
<dbReference type="Proteomes" id="UP000000560">
    <property type="component" value="Chromosome VII"/>
</dbReference>
<dbReference type="GO" id="GO:0005576">
    <property type="term" value="C:extracellular region"/>
    <property type="evidence" value="ECO:0007669"/>
    <property type="project" value="UniProtKB-SubCell"/>
</dbReference>
<dbReference type="GO" id="GO:0008810">
    <property type="term" value="F:cellulase activity"/>
    <property type="evidence" value="ECO:0000314"/>
    <property type="project" value="UniProtKB"/>
</dbReference>
<dbReference type="GO" id="GO:0030248">
    <property type="term" value="F:cellulose binding"/>
    <property type="evidence" value="ECO:0007669"/>
    <property type="project" value="InterPro"/>
</dbReference>
<dbReference type="GO" id="GO:0046872">
    <property type="term" value="F:metal ion binding"/>
    <property type="evidence" value="ECO:0007669"/>
    <property type="project" value="UniProtKB-KW"/>
</dbReference>
<dbReference type="GO" id="GO:0004497">
    <property type="term" value="F:monooxygenase activity"/>
    <property type="evidence" value="ECO:0007669"/>
    <property type="project" value="UniProtKB-KW"/>
</dbReference>
<dbReference type="GO" id="GO:0030245">
    <property type="term" value="P:cellulose catabolic process"/>
    <property type="evidence" value="ECO:0007669"/>
    <property type="project" value="UniProtKB-KW"/>
</dbReference>
<dbReference type="GO" id="GO:0009251">
    <property type="term" value="P:glucan catabolic process"/>
    <property type="evidence" value="ECO:0000314"/>
    <property type="project" value="UniProtKB"/>
</dbReference>
<dbReference type="CDD" id="cd21175">
    <property type="entry name" value="LPMO_AA9"/>
    <property type="match status" value="1"/>
</dbReference>
<dbReference type="Gene3D" id="2.70.50.70">
    <property type="match status" value="1"/>
</dbReference>
<dbReference type="InterPro" id="IPR049892">
    <property type="entry name" value="AA9"/>
</dbReference>
<dbReference type="InterPro" id="IPR005103">
    <property type="entry name" value="AA9_LPMO"/>
</dbReference>
<dbReference type="InterPro" id="IPR035971">
    <property type="entry name" value="CBD_sf"/>
</dbReference>
<dbReference type="InterPro" id="IPR000254">
    <property type="entry name" value="Cellulose-bd_dom_fun"/>
</dbReference>
<dbReference type="PANTHER" id="PTHR33353:SF17">
    <property type="entry name" value="ENDO-BETA-1,4-GLUCANASE D"/>
    <property type="match status" value="1"/>
</dbReference>
<dbReference type="PANTHER" id="PTHR33353">
    <property type="entry name" value="PUTATIVE (AFU_ORTHOLOGUE AFUA_1G12560)-RELATED"/>
    <property type="match status" value="1"/>
</dbReference>
<dbReference type="Pfam" id="PF03443">
    <property type="entry name" value="AA9"/>
    <property type="match status" value="1"/>
</dbReference>
<dbReference type="Pfam" id="PF00734">
    <property type="entry name" value="CBM_1"/>
    <property type="match status" value="1"/>
</dbReference>
<dbReference type="SMART" id="SM00236">
    <property type="entry name" value="fCBD"/>
    <property type="match status" value="1"/>
</dbReference>
<dbReference type="SUPFAM" id="SSF57180">
    <property type="entry name" value="Cellulose-binding domain"/>
    <property type="match status" value="1"/>
</dbReference>
<dbReference type="PROSITE" id="PS00562">
    <property type="entry name" value="CBM1_1"/>
    <property type="match status" value="1"/>
</dbReference>
<dbReference type="PROSITE" id="PS51164">
    <property type="entry name" value="CBM1_2"/>
    <property type="match status" value="1"/>
</dbReference>
<accession>Q5BCX8</accession>
<accession>C8VN99</accession>
<accession>Q1HFV0</accession>
<proteinExistence type="evidence at protein level"/>
<protein>
    <recommendedName>
        <fullName evidence="10">AA9 family lytic polysaccharide monooxygenase B</fullName>
        <shortName evidence="10">LPMO9B</shortName>
        <ecNumber evidence="5 8">1.14.99.56</ecNumber>
    </recommendedName>
    <alternativeName>
        <fullName evidence="11">Cellulase LPMO9B</fullName>
    </alternativeName>
    <alternativeName>
        <fullName evidence="11">Endo-beta-1,4-glucanase LPMO9B</fullName>
        <shortName evidence="11">Endoglucanase LPMO9B</shortName>
    </alternativeName>
    <alternativeName>
        <fullName evidence="11">Glycosyl hydrolase 61 family protein LPMO9B</fullName>
    </alternativeName>
</protein>
<keyword id="KW-0119">Carbohydrate metabolism</keyword>
<keyword id="KW-0136">Cellulose degradation</keyword>
<keyword id="KW-0186">Copper</keyword>
<keyword id="KW-1015">Disulfide bond</keyword>
<keyword id="KW-0479">Metal-binding</keyword>
<keyword id="KW-0503">Monooxygenase</keyword>
<keyword id="KW-0560">Oxidoreductase</keyword>
<keyword id="KW-0624">Polysaccharide degradation</keyword>
<keyword id="KW-1185">Reference proteome</keyword>
<keyword id="KW-0964">Secreted</keyword>
<keyword id="KW-0732">Signal</keyword>
<evidence type="ECO:0000250" key="1">
    <source>
        <dbReference type="UniProtKB" id="Q1K8B6"/>
    </source>
</evidence>
<evidence type="ECO:0000255" key="2"/>
<evidence type="ECO:0000255" key="3">
    <source>
        <dbReference type="PROSITE-ProRule" id="PRU00597"/>
    </source>
</evidence>
<evidence type="ECO:0000256" key="4">
    <source>
        <dbReference type="SAM" id="MobiDB-lite"/>
    </source>
</evidence>
<evidence type="ECO:0000269" key="5">
    <source>
    </source>
</evidence>
<evidence type="ECO:0000269" key="6">
    <source>
    </source>
</evidence>
<evidence type="ECO:0000269" key="7">
    <source>
    </source>
</evidence>
<evidence type="ECO:0000269" key="8">
    <source>
    </source>
</evidence>
<evidence type="ECO:0000269" key="9">
    <source>
    </source>
</evidence>
<evidence type="ECO:0000303" key="10">
    <source>
    </source>
</evidence>
<evidence type="ECO:0000305" key="11"/>
<feature type="signal peptide" evidence="2">
    <location>
        <begin position="1"/>
        <end position="18"/>
    </location>
</feature>
<feature type="chain" id="PRO_0000394067" description="AA9 family lytic polysaccharide monooxygenase B">
    <location>
        <begin position="19"/>
        <end position="357"/>
    </location>
</feature>
<feature type="domain" description="CBM1" evidence="3">
    <location>
        <begin position="319"/>
        <end position="355"/>
    </location>
</feature>
<feature type="region of interest" description="Catalytic">
    <location>
        <begin position="19"/>
        <end position="234"/>
    </location>
</feature>
<feature type="region of interest" description="Ser/Thr-rich linker">
    <location>
        <begin position="235"/>
        <end position="318"/>
    </location>
</feature>
<feature type="region of interest" description="Disordered" evidence="4">
    <location>
        <begin position="292"/>
        <end position="317"/>
    </location>
</feature>
<feature type="compositionally biased region" description="Low complexity" evidence="4">
    <location>
        <begin position="295"/>
        <end position="313"/>
    </location>
</feature>
<feature type="binding site" evidence="1">
    <location>
        <position position="19"/>
    </location>
    <ligand>
        <name>Cu(2+)</name>
        <dbReference type="ChEBI" id="CHEBI:29036"/>
        <note>catalytic</note>
    </ligand>
</feature>
<feature type="binding site" evidence="1">
    <location>
        <position position="101"/>
    </location>
    <ligand>
        <name>Cu(2+)</name>
        <dbReference type="ChEBI" id="CHEBI:29036"/>
        <note>catalytic</note>
    </ligand>
</feature>
<feature type="binding site" evidence="1">
    <location>
        <position position="168"/>
    </location>
    <ligand>
        <name>O2</name>
        <dbReference type="ChEBI" id="CHEBI:15379"/>
    </ligand>
</feature>
<feature type="binding site" evidence="1">
    <location>
        <position position="177"/>
    </location>
    <ligand>
        <name>O2</name>
        <dbReference type="ChEBI" id="CHEBI:15379"/>
    </ligand>
</feature>
<feature type="binding site" evidence="1">
    <location>
        <position position="179"/>
    </location>
    <ligand>
        <name>Cu(2+)</name>
        <dbReference type="ChEBI" id="CHEBI:29036"/>
        <note>catalytic</note>
    </ligand>
</feature>
<feature type="disulfide bond" evidence="1">
    <location>
        <begin position="61"/>
        <end position="182"/>
    </location>
</feature>
<organism>
    <name type="scientific">Emericella nidulans (strain FGSC A4 / ATCC 38163 / CBS 112.46 / NRRL 194 / M139)</name>
    <name type="common">Aspergillus nidulans</name>
    <dbReference type="NCBI Taxonomy" id="227321"/>
    <lineage>
        <taxon>Eukaryota</taxon>
        <taxon>Fungi</taxon>
        <taxon>Dikarya</taxon>
        <taxon>Ascomycota</taxon>
        <taxon>Pezizomycotina</taxon>
        <taxon>Eurotiomycetes</taxon>
        <taxon>Eurotiomycetidae</taxon>
        <taxon>Eurotiales</taxon>
        <taxon>Aspergillaceae</taxon>
        <taxon>Aspergillus</taxon>
        <taxon>Aspergillus subgen. Nidulantes</taxon>
    </lineage>
</organism>